<name>PAX_I02A5</name>
<protein>
    <recommendedName>
        <fullName>Protein PA-X</fullName>
    </recommendedName>
</protein>
<evidence type="ECO:0000250" key="1">
    <source>
        <dbReference type="UniProtKB" id="P0CK64"/>
    </source>
</evidence>
<evidence type="ECO:0000250" key="2">
    <source>
        <dbReference type="UniProtKB" id="P0CK68"/>
    </source>
</evidence>
<evidence type="ECO:0000250" key="3">
    <source>
        <dbReference type="UniProtKB" id="P0DJW8"/>
    </source>
</evidence>
<evidence type="ECO:0000250" key="4">
    <source>
        <dbReference type="UniProtKB" id="P0DXO5"/>
    </source>
</evidence>
<evidence type="ECO:0000305" key="5"/>
<organismHost>
    <name type="scientific">Aves</name>
    <dbReference type="NCBI Taxonomy" id="8782"/>
</organismHost>
<organismHost>
    <name type="scientific">Felis catus</name>
    <name type="common">Cat</name>
    <name type="synonym">Felis silvestris catus</name>
    <dbReference type="NCBI Taxonomy" id="9685"/>
</organismHost>
<organismHost>
    <name type="scientific">Homo sapiens</name>
    <name type="common">Human</name>
    <dbReference type="NCBI Taxonomy" id="9606"/>
</organismHost>
<organismHost>
    <name type="scientific">Panthera pardus</name>
    <name type="common">Leopard</name>
    <name type="synonym">Felis pardus</name>
    <dbReference type="NCBI Taxonomy" id="9691"/>
</organismHost>
<organismHost>
    <name type="scientific">Panthera tigris</name>
    <name type="common">Tiger</name>
    <dbReference type="NCBI Taxonomy" id="9694"/>
</organismHost>
<organismHost>
    <name type="scientific">Sus scrofa</name>
    <name type="common">Pig</name>
    <dbReference type="NCBI Taxonomy" id="9823"/>
</organismHost>
<organism>
    <name type="scientific">Influenza A virus (strain A/Chicken/Hong Kong/96.1/2002 H5N1 genotype Y)</name>
    <dbReference type="NCBI Taxonomy" id="279803"/>
    <lineage>
        <taxon>Viruses</taxon>
        <taxon>Riboviria</taxon>
        <taxon>Orthornavirae</taxon>
        <taxon>Negarnaviricota</taxon>
        <taxon>Polyploviricotina</taxon>
        <taxon>Insthoviricetes</taxon>
        <taxon>Articulavirales</taxon>
        <taxon>Orthomyxoviridae</taxon>
        <taxon>Alphainfluenzavirus</taxon>
        <taxon>Alphainfluenzavirus influenzae</taxon>
        <taxon>Influenza A virus</taxon>
    </lineage>
</organism>
<feature type="chain" id="PRO_0000419356" description="Protein PA-X">
    <location>
        <begin position="1"/>
        <end position="252"/>
    </location>
</feature>
<feature type="active site" evidence="2">
    <location>
        <position position="80"/>
    </location>
</feature>
<feature type="active site" evidence="2">
    <location>
        <position position="108"/>
    </location>
</feature>
<feature type="site" description="Important for efficient shutoff activity and nuclear localization" evidence="4">
    <location>
        <position position="195"/>
    </location>
</feature>
<feature type="site" description="Important for efficient shutoff activity and nuclear localization" evidence="4">
    <location>
        <position position="198"/>
    </location>
</feature>
<feature type="site" description="Important for efficient shutoff activity and nuclear localization" evidence="4">
    <location>
        <position position="199"/>
    </location>
</feature>
<feature type="site" description="Important for efficient shutoff activity" evidence="3">
    <location>
        <position position="202"/>
    </location>
</feature>
<feature type="site" description="Important for efficient shutoff activity" evidence="3">
    <location>
        <position position="203"/>
    </location>
</feature>
<feature type="site" description="Important for efficient shutoff activity" evidence="3">
    <location>
        <position position="206"/>
    </location>
</feature>
<comment type="function">
    <text evidence="1 4">Plays a major role in the shutoff of the host protein expression by cleaving mRNAs probably via an endonuclease activity. This host shutoff allows the virus to escape from the host antiviral response (By similarity). Hijacks host RNA splicing machinery to selectively target host RNAs containing introns for destruction. This may explain the preferential degradation of RNAs that have undergone co- or post-transcriptional processing (By similarity).</text>
</comment>
<comment type="subcellular location">
    <subcellularLocation>
        <location evidence="4">Host cytoplasm</location>
    </subcellularLocation>
    <subcellularLocation>
        <location evidence="4">Host nucleus</location>
    </subcellularLocation>
</comment>
<comment type="alternative products">
    <event type="ribosomal frameshifting"/>
    <isoform>
        <id>P0CK73-1</id>
        <name>PA-X</name>
        <sequence type="displayed"/>
    </isoform>
    <isoform>
        <id>Q6J835-1</id>
        <name>PA</name>
        <sequence type="external"/>
    </isoform>
</comment>
<comment type="domain">
    <text evidence="1 4">The probable endonuclease active site in the N-terminus and the basic amino acid cluster in the C-terminus are important for the shutoff activity. The C-terminus acts as a nuclear localization signal (By similarity). The C-terminus is recruited to host protein complexes involved in nuclear Pol II RNA processing (By similarity).</text>
</comment>
<comment type="similarity">
    <text evidence="5">Belongs to the influenza viruses PA-X family.</text>
</comment>
<dbReference type="EMBL" id="AY576413">
    <property type="status" value="NOT_ANNOTATED_CDS"/>
    <property type="molecule type" value="Genomic_DNA"/>
</dbReference>
<dbReference type="SMR" id="P0CK73"/>
<dbReference type="GO" id="GO:0003723">
    <property type="term" value="F:RNA binding"/>
    <property type="evidence" value="ECO:0007669"/>
    <property type="project" value="InterPro"/>
</dbReference>
<dbReference type="GO" id="GO:0039694">
    <property type="term" value="P:viral RNA genome replication"/>
    <property type="evidence" value="ECO:0007669"/>
    <property type="project" value="InterPro"/>
</dbReference>
<dbReference type="GO" id="GO:0075523">
    <property type="term" value="P:viral translational frameshifting"/>
    <property type="evidence" value="ECO:0007669"/>
    <property type="project" value="UniProtKB-KW"/>
</dbReference>
<dbReference type="FunFam" id="3.40.91.90:FF:000001">
    <property type="entry name" value="Polymerase acidic protein"/>
    <property type="match status" value="1"/>
</dbReference>
<dbReference type="Gene3D" id="3.40.91.90">
    <property type="entry name" value="Influenza RNA-dependent RNA polymerase subunit PA, endonuclease domain"/>
    <property type="match status" value="1"/>
</dbReference>
<dbReference type="InterPro" id="IPR001009">
    <property type="entry name" value="PA/PA-X"/>
</dbReference>
<dbReference type="InterPro" id="IPR038372">
    <property type="entry name" value="PA/PA-X_sf"/>
</dbReference>
<dbReference type="Pfam" id="PF00603">
    <property type="entry name" value="Flu_PA"/>
    <property type="match status" value="1"/>
</dbReference>
<keyword id="KW-1132">Decay of host mRNAs by virus</keyword>
<keyword id="KW-1262">Eukaryotic host gene expression shutoff by virus</keyword>
<keyword id="KW-1035">Host cytoplasm</keyword>
<keyword id="KW-1190">Host gene expression shutoff by virus</keyword>
<keyword id="KW-1192">Host mRNA suppression by virus</keyword>
<keyword id="KW-1048">Host nucleus</keyword>
<keyword id="KW-0945">Host-virus interaction</keyword>
<keyword id="KW-0688">Ribosomal frameshifting</keyword>
<gene>
    <name type="primary">PA</name>
</gene>
<proteinExistence type="inferred from homology"/>
<reference key="1">
    <citation type="journal article" date="2004" name="Proc. Natl. Acad. Sci. U.S.A.">
        <title>H5N1 influenza: a protean pandemic threat.</title>
        <authorList>
            <person name="Guan Y."/>
            <person name="Poon L.L.M."/>
            <person name="Cheung C.Y."/>
            <person name="Ellis T.M."/>
            <person name="Lim W."/>
            <person name="Lipatov A.S."/>
            <person name="Chan K.H."/>
            <person name="Sturm-Ramirez K.M."/>
            <person name="Cheung C.L."/>
            <person name="Leung Y.H.C."/>
            <person name="Yuen K.Y."/>
            <person name="Webster R.G."/>
            <person name="Peiris J.S.M."/>
        </authorList>
    </citation>
    <scope>NUCLEOTIDE SEQUENCE [GENOMIC RNA]</scope>
</reference>
<reference key="2">
    <citation type="submission" date="2008-03" db="EMBL/GenBank/DDBJ databases">
        <authorList>
            <person name="Guan Y."/>
            <person name="Poon L.L.M."/>
            <person name="Cheung C.Y."/>
            <person name="Ellis T.M."/>
            <person name="Lim W."/>
            <person name="Lipatov A.S."/>
            <person name="Chan K.H."/>
            <person name="Sturm-Ramirez K.M."/>
            <person name="Cheung C.L."/>
            <person name="Leung Y.H.C."/>
            <person name="Yuen K.Y."/>
            <person name="Webster R.G."/>
            <person name="Peiris J.S.M."/>
        </authorList>
    </citation>
    <scope>SEQUENCE REVISION</scope>
</reference>
<sequence>MEDFVRQCFNPMIVELTEKAMKEYGEDPKIETNKFAAICTHLEVCFMYSDFHFIDERSESIIVESGDPNALLKHRFEIIEGRDRTMAWTVVNSICNTTGVEKPKFIPDLYDYKENRFIEIGVTRREVHTYYLEKANKIKSEKTHIHIFSFTGEEMATKADYTLDEESRARIKTRLFTIRQEMASRGLWDSFVNPREAKRQLKKNLKSLEPCADLPTKVSHRTSPALKTLEPMWMDSNRTAALRASFLKCQKK</sequence>
<accession>P0CK73</accession>